<evidence type="ECO:0000255" key="1">
    <source>
        <dbReference type="HAMAP-Rule" id="MF_01642"/>
    </source>
</evidence>
<protein>
    <recommendedName>
        <fullName evidence="1">LL-diaminopimelate aminotransferase</fullName>
        <shortName evidence="1">DAP-AT</shortName>
        <shortName evidence="1">DAP-aminotransferase</shortName>
        <shortName evidence="1">LL-DAP-aminotransferase</shortName>
        <ecNumber evidence="1">2.6.1.83</ecNumber>
    </recommendedName>
</protein>
<comment type="function">
    <text evidence="1">Involved in the synthesis of meso-diaminopimelate (m-DAP or DL-DAP), required for both lysine and peptidoglycan biosynthesis. Catalyzes the direct conversion of tetrahydrodipicolinate to LL-diaminopimelate.</text>
</comment>
<comment type="catalytic activity">
    <reaction evidence="1">
        <text>(2S,6S)-2,6-diaminopimelate + 2-oxoglutarate = (S)-2,3,4,5-tetrahydrodipicolinate + L-glutamate + H2O + H(+)</text>
        <dbReference type="Rhea" id="RHEA:23988"/>
        <dbReference type="ChEBI" id="CHEBI:15377"/>
        <dbReference type="ChEBI" id="CHEBI:15378"/>
        <dbReference type="ChEBI" id="CHEBI:16810"/>
        <dbReference type="ChEBI" id="CHEBI:16845"/>
        <dbReference type="ChEBI" id="CHEBI:29985"/>
        <dbReference type="ChEBI" id="CHEBI:57609"/>
        <dbReference type="EC" id="2.6.1.83"/>
    </reaction>
</comment>
<comment type="cofactor">
    <cofactor evidence="1">
        <name>pyridoxal 5'-phosphate</name>
        <dbReference type="ChEBI" id="CHEBI:597326"/>
    </cofactor>
</comment>
<comment type="pathway">
    <text evidence="1">Amino-acid biosynthesis; L-lysine biosynthesis via DAP pathway; LL-2,6-diaminopimelate from (S)-tetrahydrodipicolinate (aminotransferase route): step 1/1.</text>
</comment>
<comment type="subunit">
    <text evidence="1">Homodimer.</text>
</comment>
<comment type="similarity">
    <text evidence="1">Belongs to the class-I pyridoxal-phosphate-dependent aminotransferase family. LL-diaminopimelate aminotransferase subfamily.</text>
</comment>
<keyword id="KW-0032">Aminotransferase</keyword>
<keyword id="KW-0663">Pyridoxal phosphate</keyword>
<keyword id="KW-0808">Transferase</keyword>
<proteinExistence type="inferred from homology"/>
<feature type="chain" id="PRO_0000312539" description="LL-diaminopimelate aminotransferase">
    <location>
        <begin position="1"/>
        <end position="408"/>
    </location>
</feature>
<feature type="binding site" evidence="1">
    <location>
        <position position="15"/>
    </location>
    <ligand>
        <name>substrate</name>
    </ligand>
</feature>
<feature type="binding site" evidence="1">
    <location>
        <position position="42"/>
    </location>
    <ligand>
        <name>substrate</name>
    </ligand>
</feature>
<feature type="binding site" evidence="1">
    <location>
        <position position="72"/>
    </location>
    <ligand>
        <name>pyridoxal 5'-phosphate</name>
        <dbReference type="ChEBI" id="CHEBI:597326"/>
    </ligand>
</feature>
<feature type="binding site" evidence="1">
    <location>
        <begin position="108"/>
        <end position="109"/>
    </location>
    <ligand>
        <name>pyridoxal 5'-phosphate</name>
        <dbReference type="ChEBI" id="CHEBI:597326"/>
    </ligand>
</feature>
<feature type="binding site" evidence="1">
    <location>
        <position position="109"/>
    </location>
    <ligand>
        <name>substrate</name>
    </ligand>
</feature>
<feature type="binding site" evidence="1">
    <location>
        <position position="132"/>
    </location>
    <ligand>
        <name>pyridoxal 5'-phosphate</name>
        <dbReference type="ChEBI" id="CHEBI:597326"/>
    </ligand>
</feature>
<feature type="binding site" evidence="1">
    <location>
        <position position="132"/>
    </location>
    <ligand>
        <name>substrate</name>
    </ligand>
</feature>
<feature type="binding site" evidence="1">
    <location>
        <position position="187"/>
    </location>
    <ligand>
        <name>pyridoxal 5'-phosphate</name>
        <dbReference type="ChEBI" id="CHEBI:597326"/>
    </ligand>
</feature>
<feature type="binding site" evidence="1">
    <location>
        <position position="187"/>
    </location>
    <ligand>
        <name>substrate</name>
    </ligand>
</feature>
<feature type="binding site" evidence="1">
    <location>
        <position position="218"/>
    </location>
    <ligand>
        <name>pyridoxal 5'-phosphate</name>
        <dbReference type="ChEBI" id="CHEBI:597326"/>
    </ligand>
</feature>
<feature type="binding site" evidence="1">
    <location>
        <begin position="246"/>
        <end position="248"/>
    </location>
    <ligand>
        <name>pyridoxal 5'-phosphate</name>
        <dbReference type="ChEBI" id="CHEBI:597326"/>
    </ligand>
</feature>
<feature type="binding site" evidence="1">
    <location>
        <position position="257"/>
    </location>
    <ligand>
        <name>pyridoxal 5'-phosphate</name>
        <dbReference type="ChEBI" id="CHEBI:597326"/>
    </ligand>
</feature>
<feature type="binding site" evidence="1">
    <location>
        <position position="292"/>
    </location>
    <ligand>
        <name>pyridoxal 5'-phosphate</name>
        <dbReference type="ChEBI" id="CHEBI:597326"/>
    </ligand>
</feature>
<feature type="binding site" evidence="1">
    <location>
        <position position="292"/>
    </location>
    <ligand>
        <name>substrate</name>
    </ligand>
</feature>
<feature type="binding site" evidence="1">
    <location>
        <position position="388"/>
    </location>
    <ligand>
        <name>substrate</name>
    </ligand>
</feature>
<feature type="modified residue" description="N6-(pyridoxal phosphate)lysine" evidence="1">
    <location>
        <position position="249"/>
    </location>
</feature>
<gene>
    <name evidence="1" type="primary">dapL</name>
    <name type="ordered locus">P9515_16801</name>
</gene>
<name>DAPAT_PROM5</name>
<accession>A2BYM6</accession>
<sequence>MVQINENYLKLKAGYLFPEISKRVNSYTQANQGSEVIKLGIGDVTEPLPNACINAMSKALNEMGTHEGFKGYGPEQGYEWLREKISKNDFISRGCQITPEEIFVSDGSKCDSSNILDILGHDNLIAVTDPVYPVYVDSNVMTGRTGETLKNGTYQGLLYLAINEDNNFLPEIPKNKVDIVYLCFPNNPTGATITKDELKKWVDYANHNKSLILFDAAYEAFIQDKDVPHSIYEIDGAKSCAIEFRSFSKNAGFTGVRCAYTVIPKCLTGQNSKGDKVDLWPLWNRRQCTKFNGVSYVVQKGAEAVYSSQGKKEVNSLIDFYMENAKIMRNKLRSAGFTVYGGCNAPYVWIKVPADMTSWDFFDHLLEKANVVGTPGSGFGLAGEGYFRLSAFNSRLNVSNAMERIINI</sequence>
<dbReference type="EC" id="2.6.1.83" evidence="1"/>
<dbReference type="EMBL" id="CP000552">
    <property type="protein sequence ID" value="ABM72887.1"/>
    <property type="molecule type" value="Genomic_DNA"/>
</dbReference>
<dbReference type="RefSeq" id="WP_011820980.1">
    <property type="nucleotide sequence ID" value="NC_008817.1"/>
</dbReference>
<dbReference type="SMR" id="A2BYM6"/>
<dbReference type="STRING" id="167542.P9515_16801"/>
<dbReference type="GeneID" id="60201822"/>
<dbReference type="KEGG" id="pmc:P9515_16801"/>
<dbReference type="eggNOG" id="COG0436">
    <property type="taxonomic scope" value="Bacteria"/>
</dbReference>
<dbReference type="HOGENOM" id="CLU_051433_0_0_3"/>
<dbReference type="OrthoDB" id="9802328at2"/>
<dbReference type="UniPathway" id="UPA00034">
    <property type="reaction ID" value="UER00466"/>
</dbReference>
<dbReference type="Proteomes" id="UP000001589">
    <property type="component" value="Chromosome"/>
</dbReference>
<dbReference type="GO" id="GO:0010285">
    <property type="term" value="F:L,L-diaminopimelate aminotransferase activity"/>
    <property type="evidence" value="ECO:0007669"/>
    <property type="project" value="UniProtKB-UniRule"/>
</dbReference>
<dbReference type="GO" id="GO:0030170">
    <property type="term" value="F:pyridoxal phosphate binding"/>
    <property type="evidence" value="ECO:0007669"/>
    <property type="project" value="UniProtKB-UniRule"/>
</dbReference>
<dbReference type="GO" id="GO:0033362">
    <property type="term" value="P:lysine biosynthetic process via diaminopimelate, diaminopimelate-aminotransferase pathway"/>
    <property type="evidence" value="ECO:0007669"/>
    <property type="project" value="UniProtKB-UniRule"/>
</dbReference>
<dbReference type="CDD" id="cd00609">
    <property type="entry name" value="AAT_like"/>
    <property type="match status" value="1"/>
</dbReference>
<dbReference type="FunFam" id="3.40.640.10:FF:000099">
    <property type="entry name" value="LL-diaminopimelate aminotransferase, chloroplastic"/>
    <property type="match status" value="1"/>
</dbReference>
<dbReference type="Gene3D" id="3.90.1150.10">
    <property type="entry name" value="Aspartate Aminotransferase, domain 1"/>
    <property type="match status" value="1"/>
</dbReference>
<dbReference type="Gene3D" id="3.40.640.10">
    <property type="entry name" value="Type I PLP-dependent aspartate aminotransferase-like (Major domain)"/>
    <property type="match status" value="1"/>
</dbReference>
<dbReference type="HAMAP" id="MF_01642">
    <property type="entry name" value="DapL_aminotrans_1"/>
    <property type="match status" value="1"/>
</dbReference>
<dbReference type="InterPro" id="IPR004839">
    <property type="entry name" value="Aminotransferase_I/II_large"/>
</dbReference>
<dbReference type="InterPro" id="IPR019942">
    <property type="entry name" value="DapL/ALD1"/>
</dbReference>
<dbReference type="InterPro" id="IPR015424">
    <property type="entry name" value="PyrdxlP-dep_Trfase"/>
</dbReference>
<dbReference type="InterPro" id="IPR015421">
    <property type="entry name" value="PyrdxlP-dep_Trfase_major"/>
</dbReference>
<dbReference type="InterPro" id="IPR015422">
    <property type="entry name" value="PyrdxlP-dep_Trfase_small"/>
</dbReference>
<dbReference type="NCBIfam" id="TIGR03542">
    <property type="entry name" value="DAPAT_plant"/>
    <property type="match status" value="1"/>
</dbReference>
<dbReference type="PANTHER" id="PTHR43144">
    <property type="entry name" value="AMINOTRANSFERASE"/>
    <property type="match status" value="1"/>
</dbReference>
<dbReference type="Pfam" id="PF00155">
    <property type="entry name" value="Aminotran_1_2"/>
    <property type="match status" value="1"/>
</dbReference>
<dbReference type="SUPFAM" id="SSF53383">
    <property type="entry name" value="PLP-dependent transferases"/>
    <property type="match status" value="1"/>
</dbReference>
<organism>
    <name type="scientific">Prochlorococcus marinus (strain MIT 9515)</name>
    <dbReference type="NCBI Taxonomy" id="167542"/>
    <lineage>
        <taxon>Bacteria</taxon>
        <taxon>Bacillati</taxon>
        <taxon>Cyanobacteriota</taxon>
        <taxon>Cyanophyceae</taxon>
        <taxon>Synechococcales</taxon>
        <taxon>Prochlorococcaceae</taxon>
        <taxon>Prochlorococcus</taxon>
    </lineage>
</organism>
<reference key="1">
    <citation type="journal article" date="2007" name="PLoS Genet.">
        <title>Patterns and implications of gene gain and loss in the evolution of Prochlorococcus.</title>
        <authorList>
            <person name="Kettler G.C."/>
            <person name="Martiny A.C."/>
            <person name="Huang K."/>
            <person name="Zucker J."/>
            <person name="Coleman M.L."/>
            <person name="Rodrigue S."/>
            <person name="Chen F."/>
            <person name="Lapidus A."/>
            <person name="Ferriera S."/>
            <person name="Johnson J."/>
            <person name="Steglich C."/>
            <person name="Church G.M."/>
            <person name="Richardson P."/>
            <person name="Chisholm S.W."/>
        </authorList>
    </citation>
    <scope>NUCLEOTIDE SEQUENCE [LARGE SCALE GENOMIC DNA]</scope>
    <source>
        <strain>MIT 9515</strain>
    </source>
</reference>